<keyword id="KW-0687">Ribonucleoprotein</keyword>
<keyword id="KW-0689">Ribosomal protein</keyword>
<keyword id="KW-0694">RNA-binding</keyword>
<keyword id="KW-0699">rRNA-binding</keyword>
<comment type="function">
    <text evidence="1">Protein S19 forms a complex with S13 that binds strongly to the 16S ribosomal RNA.</text>
</comment>
<comment type="similarity">
    <text evidence="1">Belongs to the universal ribosomal protein uS19 family.</text>
</comment>
<proteinExistence type="inferred from homology"/>
<feature type="chain" id="PRO_0000265404" description="Small ribosomal subunit protein uS19">
    <location>
        <begin position="1"/>
        <end position="91"/>
    </location>
</feature>
<reference key="1">
    <citation type="journal article" date="2005" name="J. Bacteriol.">
        <title>Whole-genome sequence analysis of Pseudomonas syringae pv. phaseolicola 1448A reveals divergence among pathovars in genes involved in virulence and transposition.</title>
        <authorList>
            <person name="Joardar V."/>
            <person name="Lindeberg M."/>
            <person name="Jackson R.W."/>
            <person name="Selengut J."/>
            <person name="Dodson R."/>
            <person name="Brinkac L.M."/>
            <person name="Daugherty S.C."/>
            <person name="DeBoy R.T."/>
            <person name="Durkin A.S."/>
            <person name="Gwinn Giglio M."/>
            <person name="Madupu R."/>
            <person name="Nelson W.C."/>
            <person name="Rosovitz M.J."/>
            <person name="Sullivan S.A."/>
            <person name="Crabtree J."/>
            <person name="Creasy T."/>
            <person name="Davidsen T.M."/>
            <person name="Haft D.H."/>
            <person name="Zafar N."/>
            <person name="Zhou L."/>
            <person name="Halpin R."/>
            <person name="Holley T."/>
            <person name="Khouri H.M."/>
            <person name="Feldblyum T.V."/>
            <person name="White O."/>
            <person name="Fraser C.M."/>
            <person name="Chatterjee A.K."/>
            <person name="Cartinhour S."/>
            <person name="Schneider D."/>
            <person name="Mansfield J.W."/>
            <person name="Collmer A."/>
            <person name="Buell R."/>
        </authorList>
    </citation>
    <scope>NUCLEOTIDE SEQUENCE [LARGE SCALE GENOMIC DNA]</scope>
    <source>
        <strain>1448A / Race 6</strain>
    </source>
</reference>
<gene>
    <name evidence="1" type="primary">rpsS</name>
    <name type="ordered locus">PSPPH_4588</name>
</gene>
<organism>
    <name type="scientific">Pseudomonas savastanoi pv. phaseolicola (strain 1448A / Race 6)</name>
    <name type="common">Pseudomonas syringae pv. phaseolicola (strain 1448A / Race 6)</name>
    <dbReference type="NCBI Taxonomy" id="264730"/>
    <lineage>
        <taxon>Bacteria</taxon>
        <taxon>Pseudomonadati</taxon>
        <taxon>Pseudomonadota</taxon>
        <taxon>Gammaproteobacteria</taxon>
        <taxon>Pseudomonadales</taxon>
        <taxon>Pseudomonadaceae</taxon>
        <taxon>Pseudomonas</taxon>
    </lineage>
</organism>
<dbReference type="EMBL" id="CP000058">
    <property type="protein sequence ID" value="AAZ36777.1"/>
    <property type="molecule type" value="Genomic_DNA"/>
</dbReference>
<dbReference type="RefSeq" id="WP_002555486.1">
    <property type="nucleotide sequence ID" value="NC_005773.3"/>
</dbReference>
<dbReference type="SMR" id="Q48D40"/>
<dbReference type="GeneID" id="98285434"/>
<dbReference type="KEGG" id="psp:PSPPH_4588"/>
<dbReference type="eggNOG" id="COG0185">
    <property type="taxonomic scope" value="Bacteria"/>
</dbReference>
<dbReference type="HOGENOM" id="CLU_144911_0_1_6"/>
<dbReference type="Proteomes" id="UP000000551">
    <property type="component" value="Chromosome"/>
</dbReference>
<dbReference type="GO" id="GO:0005737">
    <property type="term" value="C:cytoplasm"/>
    <property type="evidence" value="ECO:0007669"/>
    <property type="project" value="UniProtKB-ARBA"/>
</dbReference>
<dbReference type="GO" id="GO:0015935">
    <property type="term" value="C:small ribosomal subunit"/>
    <property type="evidence" value="ECO:0007669"/>
    <property type="project" value="InterPro"/>
</dbReference>
<dbReference type="GO" id="GO:0019843">
    <property type="term" value="F:rRNA binding"/>
    <property type="evidence" value="ECO:0007669"/>
    <property type="project" value="UniProtKB-UniRule"/>
</dbReference>
<dbReference type="GO" id="GO:0003735">
    <property type="term" value="F:structural constituent of ribosome"/>
    <property type="evidence" value="ECO:0007669"/>
    <property type="project" value="InterPro"/>
</dbReference>
<dbReference type="GO" id="GO:0000028">
    <property type="term" value="P:ribosomal small subunit assembly"/>
    <property type="evidence" value="ECO:0007669"/>
    <property type="project" value="TreeGrafter"/>
</dbReference>
<dbReference type="GO" id="GO:0006412">
    <property type="term" value="P:translation"/>
    <property type="evidence" value="ECO:0007669"/>
    <property type="project" value="UniProtKB-UniRule"/>
</dbReference>
<dbReference type="FunFam" id="3.30.860.10:FF:000001">
    <property type="entry name" value="30S ribosomal protein S19"/>
    <property type="match status" value="1"/>
</dbReference>
<dbReference type="Gene3D" id="3.30.860.10">
    <property type="entry name" value="30s Ribosomal Protein S19, Chain A"/>
    <property type="match status" value="1"/>
</dbReference>
<dbReference type="HAMAP" id="MF_00531">
    <property type="entry name" value="Ribosomal_uS19"/>
    <property type="match status" value="1"/>
</dbReference>
<dbReference type="InterPro" id="IPR002222">
    <property type="entry name" value="Ribosomal_uS19"/>
</dbReference>
<dbReference type="InterPro" id="IPR005732">
    <property type="entry name" value="Ribosomal_uS19_bac-type"/>
</dbReference>
<dbReference type="InterPro" id="IPR020934">
    <property type="entry name" value="Ribosomal_uS19_CS"/>
</dbReference>
<dbReference type="InterPro" id="IPR023575">
    <property type="entry name" value="Ribosomal_uS19_SF"/>
</dbReference>
<dbReference type="NCBIfam" id="TIGR01050">
    <property type="entry name" value="rpsS_bact"/>
    <property type="match status" value="1"/>
</dbReference>
<dbReference type="PANTHER" id="PTHR11880">
    <property type="entry name" value="RIBOSOMAL PROTEIN S19P FAMILY MEMBER"/>
    <property type="match status" value="1"/>
</dbReference>
<dbReference type="PANTHER" id="PTHR11880:SF8">
    <property type="entry name" value="SMALL RIBOSOMAL SUBUNIT PROTEIN US19M"/>
    <property type="match status" value="1"/>
</dbReference>
<dbReference type="Pfam" id="PF00203">
    <property type="entry name" value="Ribosomal_S19"/>
    <property type="match status" value="1"/>
</dbReference>
<dbReference type="PIRSF" id="PIRSF002144">
    <property type="entry name" value="Ribosomal_S19"/>
    <property type="match status" value="1"/>
</dbReference>
<dbReference type="PRINTS" id="PR00975">
    <property type="entry name" value="RIBOSOMALS19"/>
</dbReference>
<dbReference type="SUPFAM" id="SSF54570">
    <property type="entry name" value="Ribosomal protein S19"/>
    <property type="match status" value="1"/>
</dbReference>
<dbReference type="PROSITE" id="PS00323">
    <property type="entry name" value="RIBOSOMAL_S19"/>
    <property type="match status" value="1"/>
</dbReference>
<name>RS19_PSE14</name>
<evidence type="ECO:0000255" key="1">
    <source>
        <dbReference type="HAMAP-Rule" id="MF_00531"/>
    </source>
</evidence>
<evidence type="ECO:0000305" key="2"/>
<sequence length="91" mass="10334">MPRSLKKGPFIDLHLLKKIEVAAEKNDRKPVKTWSRRSMILPQMVGLTIAVHNGRQHVPVLVNEDMVGHKLGEFAGTRTYRGHVADKKAKR</sequence>
<accession>Q48D40</accession>
<protein>
    <recommendedName>
        <fullName evidence="1">Small ribosomal subunit protein uS19</fullName>
    </recommendedName>
    <alternativeName>
        <fullName evidence="2">30S ribosomal protein S19</fullName>
    </alternativeName>
</protein>